<accession>O61847</accession>
<proteinExistence type="evidence at protein level"/>
<protein>
    <recommendedName>
        <fullName evidence="7">Cyclin-dependent kinase 2</fullName>
        <ecNumber evidence="1">2.7.11.22</ecNumber>
    </recommendedName>
    <alternativeName>
        <fullName evidence="7">Cell division protein kinase 2</fullName>
    </alternativeName>
</protein>
<keyword id="KW-0067">ATP-binding</keyword>
<keyword id="KW-0131">Cell cycle</keyword>
<keyword id="KW-0132">Cell division</keyword>
<keyword id="KW-0217">Developmental protein</keyword>
<keyword id="KW-0418">Kinase</keyword>
<keyword id="KW-0460">Magnesium</keyword>
<keyword id="KW-0469">Meiosis</keyword>
<keyword id="KW-0479">Metal-binding</keyword>
<keyword id="KW-0498">Mitosis</keyword>
<keyword id="KW-0547">Nucleotide-binding</keyword>
<keyword id="KW-1185">Reference proteome</keyword>
<keyword id="KW-0723">Serine/threonine-protein kinase</keyword>
<keyword id="KW-0808">Transferase</keyword>
<organism evidence="8">
    <name type="scientific">Caenorhabditis elegans</name>
    <dbReference type="NCBI Taxonomy" id="6239"/>
    <lineage>
        <taxon>Eukaryota</taxon>
        <taxon>Metazoa</taxon>
        <taxon>Ecdysozoa</taxon>
        <taxon>Nematoda</taxon>
        <taxon>Chromadorea</taxon>
        <taxon>Rhabditida</taxon>
        <taxon>Rhabditina</taxon>
        <taxon>Rhabditomorpha</taxon>
        <taxon>Rhabditoidea</taxon>
        <taxon>Rhabditidae</taxon>
        <taxon>Peloderinae</taxon>
        <taxon>Caenorhabditis</taxon>
    </lineage>
</organism>
<dbReference type="EC" id="2.7.11.22" evidence="1"/>
<dbReference type="EMBL" id="BX284601">
    <property type="protein sequence ID" value="CCD70003.1"/>
    <property type="molecule type" value="Genomic_DNA"/>
</dbReference>
<dbReference type="PIR" id="T33159">
    <property type="entry name" value="T33159"/>
</dbReference>
<dbReference type="RefSeq" id="NP_001021537.1">
    <property type="nucleotide sequence ID" value="NM_001026366.1"/>
</dbReference>
<dbReference type="SMR" id="O61847"/>
<dbReference type="ComplexPortal" id="CPX-1127">
    <property type="entry name" value="Cyclin cye-1-cdk2 complex"/>
</dbReference>
<dbReference type="FunCoup" id="O61847">
    <property type="interactions" value="6"/>
</dbReference>
<dbReference type="IntAct" id="O61847">
    <property type="interactions" value="1"/>
</dbReference>
<dbReference type="STRING" id="6239.K03E5.3a.1"/>
<dbReference type="PaxDb" id="6239-K03E5.3"/>
<dbReference type="PeptideAtlas" id="O61847"/>
<dbReference type="EnsemblMetazoa" id="K03E5.3a.1">
    <property type="protein sequence ID" value="K03E5.3a.1"/>
    <property type="gene ID" value="WBGene00019362"/>
</dbReference>
<dbReference type="GeneID" id="171911"/>
<dbReference type="KEGG" id="cel:CELE_K03E5.3"/>
<dbReference type="UCSC" id="K03E5.3">
    <property type="organism name" value="c. elegans"/>
</dbReference>
<dbReference type="AGR" id="WB:WBGene00019362"/>
<dbReference type="CTD" id="171911"/>
<dbReference type="WormBase" id="K03E5.3a">
    <property type="protein sequence ID" value="CE51951"/>
    <property type="gene ID" value="WBGene00019362"/>
    <property type="gene designation" value="cdk-2"/>
</dbReference>
<dbReference type="eggNOG" id="KOG0594">
    <property type="taxonomic scope" value="Eukaryota"/>
</dbReference>
<dbReference type="GeneTree" id="ENSGT00940000160805"/>
<dbReference type="HOGENOM" id="CLU_000288_181_1_1"/>
<dbReference type="InParanoid" id="O61847"/>
<dbReference type="OMA" id="PGTCLRE"/>
<dbReference type="OrthoDB" id="1732493at2759"/>
<dbReference type="PhylomeDB" id="O61847"/>
<dbReference type="Reactome" id="R-CEL-1538133">
    <property type="pathway name" value="G0 and Early G1"/>
</dbReference>
<dbReference type="Reactome" id="R-CEL-187577">
    <property type="pathway name" value="SCF(Skp2)-mediated degradation of p27/p21"/>
</dbReference>
<dbReference type="Reactome" id="R-CEL-2559586">
    <property type="pathway name" value="DNA Damage/Telomere Stress Induced Senescence"/>
</dbReference>
<dbReference type="Reactome" id="R-CEL-6804116">
    <property type="pathway name" value="TP53 Regulates Transcription of Genes Involved in G1 Cell Cycle Arrest"/>
</dbReference>
<dbReference type="Reactome" id="R-CEL-68949">
    <property type="pathway name" value="Orc1 removal from chromatin"/>
</dbReference>
<dbReference type="Reactome" id="R-CEL-68962">
    <property type="pathway name" value="Activation of the pre-replicative complex"/>
</dbReference>
<dbReference type="Reactome" id="R-CEL-69017">
    <property type="pathway name" value="CDK-mediated phosphorylation and removal of Cdc6"/>
</dbReference>
<dbReference type="Reactome" id="R-CEL-69202">
    <property type="pathway name" value="Cyclin E associated events during G1/S transition"/>
</dbReference>
<dbReference type="Reactome" id="R-CEL-69563">
    <property type="pathway name" value="p53-Dependent G1 DNA Damage Response"/>
</dbReference>
<dbReference type="Reactome" id="R-CEL-69656">
    <property type="pathway name" value="Cyclin A:Cdk2-associated events at S phase entry"/>
</dbReference>
<dbReference type="PRO" id="PR:O61847"/>
<dbReference type="Proteomes" id="UP000001940">
    <property type="component" value="Chromosome I"/>
</dbReference>
<dbReference type="Bgee" id="WBGene00019362">
    <property type="expression patterns" value="Expressed in adult organism and 3 other cell types or tissues"/>
</dbReference>
<dbReference type="ExpressionAtlas" id="O61847">
    <property type="expression patterns" value="baseline and differential"/>
</dbReference>
<dbReference type="GO" id="GO:0000785">
    <property type="term" value="C:chromatin"/>
    <property type="evidence" value="ECO:0000314"/>
    <property type="project" value="UniProtKB"/>
</dbReference>
<dbReference type="GO" id="GO:0097134">
    <property type="term" value="C:cyclin E1-CDK2 complex"/>
    <property type="evidence" value="ECO:0000353"/>
    <property type="project" value="ComplexPortal"/>
</dbReference>
<dbReference type="GO" id="GO:0000307">
    <property type="term" value="C:cyclin-dependent protein kinase holoenzyme complex"/>
    <property type="evidence" value="ECO:0000318"/>
    <property type="project" value="GO_Central"/>
</dbReference>
<dbReference type="GO" id="GO:0005737">
    <property type="term" value="C:cytoplasm"/>
    <property type="evidence" value="ECO:0000318"/>
    <property type="project" value="GO_Central"/>
</dbReference>
<dbReference type="GO" id="GO:0005634">
    <property type="term" value="C:nucleus"/>
    <property type="evidence" value="ECO:0000318"/>
    <property type="project" value="GO_Central"/>
</dbReference>
<dbReference type="GO" id="GO:0005524">
    <property type="term" value="F:ATP binding"/>
    <property type="evidence" value="ECO:0007669"/>
    <property type="project" value="UniProtKB-KW"/>
</dbReference>
<dbReference type="GO" id="GO:0030332">
    <property type="term" value="F:cyclin binding"/>
    <property type="evidence" value="ECO:0000318"/>
    <property type="project" value="GO_Central"/>
</dbReference>
<dbReference type="GO" id="GO:0004693">
    <property type="term" value="F:cyclin-dependent protein serine/threonine kinase activity"/>
    <property type="evidence" value="ECO:0000318"/>
    <property type="project" value="GO_Central"/>
</dbReference>
<dbReference type="GO" id="GO:0046872">
    <property type="term" value="F:metal ion binding"/>
    <property type="evidence" value="ECO:0007669"/>
    <property type="project" value="UniProtKB-KW"/>
</dbReference>
<dbReference type="GO" id="GO:0106310">
    <property type="term" value="F:protein serine kinase activity"/>
    <property type="evidence" value="ECO:0007669"/>
    <property type="project" value="RHEA"/>
</dbReference>
<dbReference type="GO" id="GO:0051301">
    <property type="term" value="P:cell division"/>
    <property type="evidence" value="ECO:0007669"/>
    <property type="project" value="UniProtKB-KW"/>
</dbReference>
<dbReference type="GO" id="GO:0009792">
    <property type="term" value="P:embryo development ending in birth or egg hatching"/>
    <property type="evidence" value="ECO:0000315"/>
    <property type="project" value="UniProtKB"/>
</dbReference>
<dbReference type="GO" id="GO:0000082">
    <property type="term" value="P:G1/S transition of mitotic cell cycle"/>
    <property type="evidence" value="ECO:0000315"/>
    <property type="project" value="ComplexPortal"/>
</dbReference>
<dbReference type="GO" id="GO:0051729">
    <property type="term" value="P:germline cell cycle switching, mitotic to meiotic cell cycle"/>
    <property type="evidence" value="ECO:0000315"/>
    <property type="project" value="WormBase"/>
</dbReference>
<dbReference type="GO" id="GO:0051321">
    <property type="term" value="P:meiotic cell cycle"/>
    <property type="evidence" value="ECO:0007669"/>
    <property type="project" value="UniProtKB-KW"/>
</dbReference>
<dbReference type="GO" id="GO:0002119">
    <property type="term" value="P:nematode larval development"/>
    <property type="evidence" value="ECO:0000315"/>
    <property type="project" value="UniProtKB"/>
</dbReference>
<dbReference type="GO" id="GO:0051081">
    <property type="term" value="P:nuclear membrane disassembly"/>
    <property type="evidence" value="ECO:0000315"/>
    <property type="project" value="UniProtKB"/>
</dbReference>
<dbReference type="GO" id="GO:1900087">
    <property type="term" value="P:positive regulation of G1/S transition of mitotic cell cycle"/>
    <property type="evidence" value="ECO:0000315"/>
    <property type="project" value="UniProtKB"/>
</dbReference>
<dbReference type="GO" id="GO:1904781">
    <property type="term" value="P:positive regulation of protein localization to centrosome"/>
    <property type="evidence" value="ECO:0000316"/>
    <property type="project" value="UniProtKB"/>
</dbReference>
<dbReference type="GO" id="GO:0010608">
    <property type="term" value="P:post-transcriptional regulation of gene expression"/>
    <property type="evidence" value="ECO:0000315"/>
    <property type="project" value="WormBase"/>
</dbReference>
<dbReference type="GO" id="GO:0008104">
    <property type="term" value="P:protein localization"/>
    <property type="evidence" value="ECO:0000315"/>
    <property type="project" value="UniProtKB"/>
</dbReference>
<dbReference type="GO" id="GO:0030588">
    <property type="term" value="P:pseudocleavage"/>
    <property type="evidence" value="ECO:0000315"/>
    <property type="project" value="UniProtKB"/>
</dbReference>
<dbReference type="GO" id="GO:0010389">
    <property type="term" value="P:regulation of G2/M transition of mitotic cell cycle"/>
    <property type="evidence" value="ECO:0000318"/>
    <property type="project" value="GO_Central"/>
</dbReference>
<dbReference type="GO" id="GO:0010468">
    <property type="term" value="P:regulation of gene expression"/>
    <property type="evidence" value="ECO:0000318"/>
    <property type="project" value="GO_Central"/>
</dbReference>
<dbReference type="GO" id="GO:0051445">
    <property type="term" value="P:regulation of meiotic cell cycle"/>
    <property type="evidence" value="ECO:0000315"/>
    <property type="project" value="UniProtKB"/>
</dbReference>
<dbReference type="GO" id="GO:1904776">
    <property type="term" value="P:regulation of protein localization to cell cortex"/>
    <property type="evidence" value="ECO:0000315"/>
    <property type="project" value="UniProtKB"/>
</dbReference>
<dbReference type="GO" id="GO:0007165">
    <property type="term" value="P:signal transduction"/>
    <property type="evidence" value="ECO:0000318"/>
    <property type="project" value="GO_Central"/>
</dbReference>
<dbReference type="CDD" id="cd07829">
    <property type="entry name" value="STKc_CDK_like"/>
    <property type="match status" value="1"/>
</dbReference>
<dbReference type="FunFam" id="3.30.200.20:FF:000552">
    <property type="entry name" value="Cell division protein kinase, putative"/>
    <property type="match status" value="1"/>
</dbReference>
<dbReference type="FunFam" id="1.10.510.10:FF:000706">
    <property type="entry name" value="Cyclin-dependent kinase 1"/>
    <property type="match status" value="1"/>
</dbReference>
<dbReference type="Gene3D" id="3.30.200.20">
    <property type="entry name" value="Phosphorylase Kinase, domain 1"/>
    <property type="match status" value="1"/>
</dbReference>
<dbReference type="Gene3D" id="1.10.510.10">
    <property type="entry name" value="Transferase(Phosphotransferase) domain 1"/>
    <property type="match status" value="1"/>
</dbReference>
<dbReference type="InterPro" id="IPR050108">
    <property type="entry name" value="CDK"/>
</dbReference>
<dbReference type="InterPro" id="IPR011009">
    <property type="entry name" value="Kinase-like_dom_sf"/>
</dbReference>
<dbReference type="InterPro" id="IPR000719">
    <property type="entry name" value="Prot_kinase_dom"/>
</dbReference>
<dbReference type="InterPro" id="IPR017441">
    <property type="entry name" value="Protein_kinase_ATP_BS"/>
</dbReference>
<dbReference type="InterPro" id="IPR008271">
    <property type="entry name" value="Ser/Thr_kinase_AS"/>
</dbReference>
<dbReference type="PANTHER" id="PTHR24056">
    <property type="entry name" value="CELL DIVISION PROTEIN KINASE"/>
    <property type="match status" value="1"/>
</dbReference>
<dbReference type="PANTHER" id="PTHR24056:SF254">
    <property type="entry name" value="CYCLIN-DEPENDENT KINASE 2"/>
    <property type="match status" value="1"/>
</dbReference>
<dbReference type="Pfam" id="PF00069">
    <property type="entry name" value="Pkinase"/>
    <property type="match status" value="1"/>
</dbReference>
<dbReference type="SMART" id="SM00220">
    <property type="entry name" value="S_TKc"/>
    <property type="match status" value="1"/>
</dbReference>
<dbReference type="SUPFAM" id="SSF56112">
    <property type="entry name" value="Protein kinase-like (PK-like)"/>
    <property type="match status" value="1"/>
</dbReference>
<dbReference type="PROSITE" id="PS00107">
    <property type="entry name" value="PROTEIN_KINASE_ATP"/>
    <property type="match status" value="1"/>
</dbReference>
<dbReference type="PROSITE" id="PS50011">
    <property type="entry name" value="PROTEIN_KINASE_DOM"/>
    <property type="match status" value="1"/>
</dbReference>
<dbReference type="PROSITE" id="PS00108">
    <property type="entry name" value="PROTEIN_KINASE_ST"/>
    <property type="match status" value="1"/>
</dbReference>
<evidence type="ECO:0000250" key="1">
    <source>
        <dbReference type="UniProtKB" id="P24941"/>
    </source>
</evidence>
<evidence type="ECO:0000255" key="2">
    <source>
        <dbReference type="PROSITE-ProRule" id="PRU00159"/>
    </source>
</evidence>
<evidence type="ECO:0000269" key="3">
    <source>
    </source>
</evidence>
<evidence type="ECO:0000269" key="4">
    <source>
    </source>
</evidence>
<evidence type="ECO:0000269" key="5">
    <source>
    </source>
</evidence>
<evidence type="ECO:0000269" key="6">
    <source>
    </source>
</evidence>
<evidence type="ECO:0000305" key="7"/>
<evidence type="ECO:0000312" key="8">
    <source>
        <dbReference type="Proteomes" id="UP000001940"/>
    </source>
</evidence>
<evidence type="ECO:0000312" key="9">
    <source>
        <dbReference type="WormBase" id="K03E5.3a"/>
    </source>
</evidence>
<feature type="chain" id="PRO_0000433387" description="Cyclin-dependent kinase 2" evidence="7">
    <location>
        <begin position="1"/>
        <end position="368"/>
    </location>
</feature>
<feature type="domain" description="Protein kinase" evidence="2">
    <location>
        <begin position="45"/>
        <end position="330"/>
    </location>
</feature>
<feature type="active site" description="Proton acceptor" evidence="2">
    <location>
        <position position="170"/>
    </location>
</feature>
<feature type="binding site" evidence="2">
    <location>
        <begin position="51"/>
        <end position="59"/>
    </location>
    <ligand>
        <name>ATP</name>
        <dbReference type="ChEBI" id="CHEBI:30616"/>
    </ligand>
</feature>
<feature type="binding site" evidence="2">
    <location>
        <position position="74"/>
    </location>
    <ligand>
        <name>ATP</name>
        <dbReference type="ChEBI" id="CHEBI:30616"/>
    </ligand>
</feature>
<feature type="binding site" evidence="1">
    <location>
        <position position="175"/>
    </location>
    <ligand>
        <name>Mg(2+)</name>
        <dbReference type="ChEBI" id="CHEBI:18420"/>
    </ligand>
</feature>
<feature type="binding site" evidence="1">
    <location>
        <position position="188"/>
    </location>
    <ligand>
        <name>Mg(2+)</name>
        <dbReference type="ChEBI" id="CHEBI:18420"/>
    </ligand>
</feature>
<comment type="function">
    <text evidence="4 5 6">Serine/threonine-protein kinase which, in association with cye-1, regulates proliferation, quiescent state and cell fate during the development of several cell lineages (PubMed:17115027, PubMed:17476329). In the embryo, initiates the establishment of cell polarity through the recruitment of the centrosomal proteins spd-2 and spd-5 during prophase (PubMed:17115027). Phosphorylation and inhibition of the translational repressor gld-1 by the cdk-2/cye-1 complex regulates the pool of germline stem cells and the size of the mitotic zone in the gonads by preventing entry into meiosis (PubMed:21455289).</text>
</comment>
<comment type="catalytic activity">
    <reaction evidence="1">
        <text>L-seryl-[protein] + ATP = O-phospho-L-seryl-[protein] + ADP + H(+)</text>
        <dbReference type="Rhea" id="RHEA:17989"/>
        <dbReference type="Rhea" id="RHEA-COMP:9863"/>
        <dbReference type="Rhea" id="RHEA-COMP:11604"/>
        <dbReference type="ChEBI" id="CHEBI:15378"/>
        <dbReference type="ChEBI" id="CHEBI:29999"/>
        <dbReference type="ChEBI" id="CHEBI:30616"/>
        <dbReference type="ChEBI" id="CHEBI:83421"/>
        <dbReference type="ChEBI" id="CHEBI:456216"/>
        <dbReference type="EC" id="2.7.11.22"/>
    </reaction>
</comment>
<comment type="catalytic activity">
    <reaction evidence="1">
        <text>L-threonyl-[protein] + ATP = O-phospho-L-threonyl-[protein] + ADP + H(+)</text>
        <dbReference type="Rhea" id="RHEA:46608"/>
        <dbReference type="Rhea" id="RHEA-COMP:11060"/>
        <dbReference type="Rhea" id="RHEA-COMP:11605"/>
        <dbReference type="ChEBI" id="CHEBI:15378"/>
        <dbReference type="ChEBI" id="CHEBI:30013"/>
        <dbReference type="ChEBI" id="CHEBI:30616"/>
        <dbReference type="ChEBI" id="CHEBI:61977"/>
        <dbReference type="ChEBI" id="CHEBI:456216"/>
        <dbReference type="EC" id="2.7.11.22"/>
    </reaction>
</comment>
<comment type="cofactor">
    <cofactor evidence="1">
        <name>Mg(2+)</name>
        <dbReference type="ChEBI" id="CHEBI:18420"/>
    </cofactor>
    <text evidence="1">Binds 2 Mg(2+) ions.</text>
</comment>
<comment type="subunit">
    <text evidence="1 6">Interacts with cye-1 (By similarity); the interaction likely regulates cdk-2 activity and is probably required for gld-1 phosphorylation.</text>
</comment>
<comment type="interaction">
    <interactant intactId="EBI-14063070">
        <id>O61847</id>
    </interactant>
    <interactant intactId="EBI-6499833">
        <id>O01501</id>
        <label>cye-1</label>
    </interactant>
    <organismsDiffer>false</organismsDiffer>
    <experiments>3</experiments>
</comment>
<comment type="disruption phenotype">
    <text evidence="3 4 5 6">RNAi-mediated knockdown causes arrest at various developmental stages. The few animals reaching adulthood are sterile and have a protruding vulva (PubMed:10207147). Gonads have an abnormal mitotic zone characterized by an enlargement of the distal germ cell nuclei, a reduction in the number of mitotic germ cells, a reduction in the mitotic region length and abnormal expression of gld-1 (PubMed:21455289). Embryos have persistent ruffling throughout the cortex and mislocalization of par-2, which remains cytoplasmic, and par-6, which remains distributed throughout the cortex. In 33 percent of embryos the first division is symmetric (PubMed:17115027). Production of 2 additional distal tip cells (DTC) during larval development (PubMed:17476329). RNAi-mediated knockdown in embryos causes a slight delay in cell cycle progression (PubMed:17115027).</text>
</comment>
<comment type="similarity">
    <text evidence="7">Belongs to the protein kinase superfamily. CMGC Ser/Thr protein kinase family. CDC2/CDKX subfamily.</text>
</comment>
<name>CDK2_CAEEL</name>
<reference evidence="8" key="1">
    <citation type="journal article" date="1998" name="Science">
        <title>Genome sequence of the nematode C. elegans: a platform for investigating biology.</title>
        <authorList>
            <consortium name="The C. elegans sequencing consortium"/>
        </authorList>
    </citation>
    <scope>NUCLEOTIDE SEQUENCE [LARGE SCALE GENOMIC DNA]</scope>
    <source>
        <strain evidence="8">Bristol N2</strain>
    </source>
</reference>
<reference evidence="7" key="2">
    <citation type="journal article" date="1999" name="Development">
        <title>The Caenorhabditis elegans gene ncc-1 encodes a cdc2-related kinase required for M phase in meiotic and mitotic cell divisions, but not for S phase.</title>
        <authorList>
            <person name="Boxem M."/>
            <person name="Srinivasan D.G."/>
            <person name="van den Heuvel S."/>
        </authorList>
    </citation>
    <scope>DISRUPTION PHENOTYPE</scope>
</reference>
<reference evidence="7" key="3">
    <citation type="journal article" date="2006" name="Nat. Cell Biol.">
        <title>Cyclin E-Cdk2 temporally regulates centrosome assembly and establishment of polarity in Caenorhabditis elegans embryos.</title>
        <authorList>
            <person name="Cowan C.R."/>
            <person name="Hyman A.A."/>
        </authorList>
    </citation>
    <scope>FUNCTION</scope>
    <scope>DISRUPTION PHENOTYPE</scope>
</reference>
<reference evidence="7" key="4">
    <citation type="journal article" date="2007" name="PLoS ONE">
        <title>Cyclin E and CDK2 repress the terminal differentiation of quiescent cells after asymmetric division in C. elegans.</title>
        <authorList>
            <person name="Fujita M."/>
            <person name="Takeshita H."/>
            <person name="Sawa H."/>
        </authorList>
    </citation>
    <scope>FUNCTION</scope>
    <scope>DISRUPTION PHENOTYPE</scope>
</reference>
<reference evidence="7" key="5">
    <citation type="journal article" date="2011" name="PLoS Genet.">
        <title>Cyclin E and Cdk2 control GLD-1, the mitosis/meiosis decision, and germline stem cells in Caenorhabditis elegans.</title>
        <authorList>
            <person name="Jeong J."/>
            <person name="Verheyden J.M."/>
            <person name="Kimble J."/>
        </authorList>
    </citation>
    <scope>FUNCTION</scope>
    <scope>SUBUNIT</scope>
    <scope>DISRUPTION PHENOTYPE</scope>
</reference>
<gene>
    <name evidence="9" type="primary">cdk-2</name>
    <name evidence="9" type="ORF">K03E5.3</name>
</gene>
<sequence>MSREIRSLESIISDARENTHEKMLIRKQRDMTTDIAPERDLQGRFCSLRRIGEGTYGVVFKAIHVRDNVKCALKMIRTDRDEEGIPSTCLREISCIKDLQHDNIVTLFDIIYANSKLYMVFEFIDRDLKNLLEMLEPTNSVLPPNYVKSFMWQLLSALSYCHLRRIVHRDLKPQNILVSDSGVIKIADFGLARNFSFPSRNYTHEVVTLWYRPPEILLGSQRYSTSLDMWSLGCIFSEIASNKPLFPGECEISQLFKIFEIVGTPNIKSWPGVDSFPHYKAVFPQWPVNLKKLEETSCLTGNGLDVLREILRYPPERRLTAKGALSHRYFLQNGFTQNRPSVTDLMKDIRAQNRTPPLLNNHQEKSIF</sequence>